<reference key="1">
    <citation type="submission" date="2006-12" db="EMBL/GenBank/DDBJ databases">
        <title>Complete sequence of chromosome 1 of Paracoccus denitrificans PD1222.</title>
        <authorList>
            <person name="Copeland A."/>
            <person name="Lucas S."/>
            <person name="Lapidus A."/>
            <person name="Barry K."/>
            <person name="Detter J.C."/>
            <person name="Glavina del Rio T."/>
            <person name="Hammon N."/>
            <person name="Israni S."/>
            <person name="Dalin E."/>
            <person name="Tice H."/>
            <person name="Pitluck S."/>
            <person name="Munk A.C."/>
            <person name="Brettin T."/>
            <person name="Bruce D."/>
            <person name="Han C."/>
            <person name="Tapia R."/>
            <person name="Gilna P."/>
            <person name="Schmutz J."/>
            <person name="Larimer F."/>
            <person name="Land M."/>
            <person name="Hauser L."/>
            <person name="Kyrpides N."/>
            <person name="Lykidis A."/>
            <person name="Spiro S."/>
            <person name="Richardson D.J."/>
            <person name="Moir J.W.B."/>
            <person name="Ferguson S.J."/>
            <person name="van Spanning R.J.M."/>
            <person name="Richardson P."/>
        </authorList>
    </citation>
    <scope>NUCLEOTIDE SEQUENCE [LARGE SCALE GENOMIC DNA]</scope>
    <source>
        <strain>Pd 1222</strain>
    </source>
</reference>
<name>RL18_PARDP</name>
<protein>
    <recommendedName>
        <fullName evidence="1">Large ribosomal subunit protein uL18</fullName>
    </recommendedName>
    <alternativeName>
        <fullName evidence="2">50S ribosomal protein L18</fullName>
    </alternativeName>
</protein>
<evidence type="ECO:0000255" key="1">
    <source>
        <dbReference type="HAMAP-Rule" id="MF_01337"/>
    </source>
</evidence>
<evidence type="ECO:0000305" key="2"/>
<sequence length="119" mass="12949">MALNKRELFQKRRLRVRNKLRKISDGRPRLSVHRSSKNISVQVIDDVKGVTLAAASSLEKDLGVVGKNNVEAAAKIGAAIAERAKKAGVEEVIFDRGGFLFHGKIKALADAAREGGLKF</sequence>
<comment type="function">
    <text evidence="1">This is one of the proteins that bind and probably mediate the attachment of the 5S RNA into the large ribosomal subunit, where it forms part of the central protuberance.</text>
</comment>
<comment type="subunit">
    <text evidence="1">Part of the 50S ribosomal subunit; part of the 5S rRNA/L5/L18/L25 subcomplex. Contacts the 5S and 23S rRNAs.</text>
</comment>
<comment type="similarity">
    <text evidence="1">Belongs to the universal ribosomal protein uL18 family.</text>
</comment>
<dbReference type="EMBL" id="CP000489">
    <property type="protein sequence ID" value="ABL68887.1"/>
    <property type="molecule type" value="Genomic_DNA"/>
</dbReference>
<dbReference type="RefSeq" id="WP_011747115.1">
    <property type="nucleotide sequence ID" value="NC_008686.1"/>
</dbReference>
<dbReference type="SMR" id="A1B043"/>
<dbReference type="STRING" id="318586.Pden_0775"/>
<dbReference type="EnsemblBacteria" id="ABL68887">
    <property type="protein sequence ID" value="ABL68887"/>
    <property type="gene ID" value="Pden_0775"/>
</dbReference>
<dbReference type="GeneID" id="93451999"/>
<dbReference type="KEGG" id="pde:Pden_0775"/>
<dbReference type="eggNOG" id="COG0256">
    <property type="taxonomic scope" value="Bacteria"/>
</dbReference>
<dbReference type="HOGENOM" id="CLU_098841_0_1_5"/>
<dbReference type="OrthoDB" id="9810939at2"/>
<dbReference type="Proteomes" id="UP000000361">
    <property type="component" value="Chromosome 1"/>
</dbReference>
<dbReference type="GO" id="GO:0022625">
    <property type="term" value="C:cytosolic large ribosomal subunit"/>
    <property type="evidence" value="ECO:0007669"/>
    <property type="project" value="TreeGrafter"/>
</dbReference>
<dbReference type="GO" id="GO:0008097">
    <property type="term" value="F:5S rRNA binding"/>
    <property type="evidence" value="ECO:0007669"/>
    <property type="project" value="TreeGrafter"/>
</dbReference>
<dbReference type="GO" id="GO:0003735">
    <property type="term" value="F:structural constituent of ribosome"/>
    <property type="evidence" value="ECO:0007669"/>
    <property type="project" value="InterPro"/>
</dbReference>
<dbReference type="GO" id="GO:0006412">
    <property type="term" value="P:translation"/>
    <property type="evidence" value="ECO:0007669"/>
    <property type="project" value="UniProtKB-UniRule"/>
</dbReference>
<dbReference type="CDD" id="cd00432">
    <property type="entry name" value="Ribosomal_L18_L5e"/>
    <property type="match status" value="1"/>
</dbReference>
<dbReference type="FunFam" id="3.30.420.100:FF:000001">
    <property type="entry name" value="50S ribosomal protein L18"/>
    <property type="match status" value="1"/>
</dbReference>
<dbReference type="Gene3D" id="3.30.420.100">
    <property type="match status" value="1"/>
</dbReference>
<dbReference type="HAMAP" id="MF_01337_B">
    <property type="entry name" value="Ribosomal_uL18_B"/>
    <property type="match status" value="1"/>
</dbReference>
<dbReference type="InterPro" id="IPR004389">
    <property type="entry name" value="Ribosomal_uL18_bac-type"/>
</dbReference>
<dbReference type="InterPro" id="IPR005484">
    <property type="entry name" value="Ribosomal_uL18_bac/euk"/>
</dbReference>
<dbReference type="NCBIfam" id="TIGR00060">
    <property type="entry name" value="L18_bact"/>
    <property type="match status" value="1"/>
</dbReference>
<dbReference type="PANTHER" id="PTHR12899">
    <property type="entry name" value="39S RIBOSOMAL PROTEIN L18, MITOCHONDRIAL"/>
    <property type="match status" value="1"/>
</dbReference>
<dbReference type="PANTHER" id="PTHR12899:SF3">
    <property type="entry name" value="LARGE RIBOSOMAL SUBUNIT PROTEIN UL18M"/>
    <property type="match status" value="1"/>
</dbReference>
<dbReference type="Pfam" id="PF00861">
    <property type="entry name" value="Ribosomal_L18p"/>
    <property type="match status" value="1"/>
</dbReference>
<dbReference type="SUPFAM" id="SSF53137">
    <property type="entry name" value="Translational machinery components"/>
    <property type="match status" value="1"/>
</dbReference>
<gene>
    <name evidence="1" type="primary">rplR</name>
    <name type="ordered locus">Pden_0775</name>
</gene>
<proteinExistence type="inferred from homology"/>
<feature type="chain" id="PRO_1000053074" description="Large ribosomal subunit protein uL18">
    <location>
        <begin position="1"/>
        <end position="119"/>
    </location>
</feature>
<accession>A1B043</accession>
<keyword id="KW-1185">Reference proteome</keyword>
<keyword id="KW-0687">Ribonucleoprotein</keyword>
<keyword id="KW-0689">Ribosomal protein</keyword>
<keyword id="KW-0694">RNA-binding</keyword>
<keyword id="KW-0699">rRNA-binding</keyword>
<organism>
    <name type="scientific">Paracoccus denitrificans (strain Pd 1222)</name>
    <dbReference type="NCBI Taxonomy" id="318586"/>
    <lineage>
        <taxon>Bacteria</taxon>
        <taxon>Pseudomonadati</taxon>
        <taxon>Pseudomonadota</taxon>
        <taxon>Alphaproteobacteria</taxon>
        <taxon>Rhodobacterales</taxon>
        <taxon>Paracoccaceae</taxon>
        <taxon>Paracoccus</taxon>
    </lineage>
</organism>